<feature type="chain" id="PRO_0000137873" description="Adenylosuccinate lyase">
    <location>
        <begin position="1"/>
        <end position="431"/>
    </location>
</feature>
<feature type="active site" description="Proton donor/acceptor" evidence="1">
    <location>
        <position position="141"/>
    </location>
</feature>
<feature type="active site" description="Proton donor/acceptor" evidence="1">
    <location>
        <position position="262"/>
    </location>
</feature>
<feature type="binding site" evidence="1">
    <location>
        <begin position="4"/>
        <end position="5"/>
    </location>
    <ligand>
        <name>N(6)-(1,2-dicarboxyethyl)-AMP</name>
        <dbReference type="ChEBI" id="CHEBI:57567"/>
    </ligand>
</feature>
<feature type="binding site" evidence="1">
    <location>
        <begin position="67"/>
        <end position="69"/>
    </location>
    <ligand>
        <name>N(6)-(1,2-dicarboxyethyl)-AMP</name>
        <dbReference type="ChEBI" id="CHEBI:57567"/>
    </ligand>
</feature>
<feature type="binding site" evidence="1">
    <location>
        <begin position="93"/>
        <end position="94"/>
    </location>
    <ligand>
        <name>N(6)-(1,2-dicarboxyethyl)-AMP</name>
        <dbReference type="ChEBI" id="CHEBI:57567"/>
    </ligand>
</feature>
<feature type="binding site" evidence="1">
    <location>
        <position position="212"/>
    </location>
    <ligand>
        <name>N(6)-(1,2-dicarboxyethyl)-AMP</name>
        <dbReference type="ChEBI" id="CHEBI:57567"/>
    </ligand>
</feature>
<feature type="binding site" evidence="1">
    <location>
        <position position="263"/>
    </location>
    <ligand>
        <name>N(6)-(1,2-dicarboxyethyl)-AMP</name>
        <dbReference type="ChEBI" id="CHEBI:57567"/>
    </ligand>
</feature>
<feature type="binding site" evidence="1">
    <location>
        <begin position="268"/>
        <end position="270"/>
    </location>
    <ligand>
        <name>N(6)-(1,2-dicarboxyethyl)-AMP</name>
        <dbReference type="ChEBI" id="CHEBI:57567"/>
    </ligand>
</feature>
<feature type="binding site" evidence="1">
    <location>
        <position position="276"/>
    </location>
    <ligand>
        <name>N(6)-(1,2-dicarboxyethyl)-AMP</name>
        <dbReference type="ChEBI" id="CHEBI:57567"/>
    </ligand>
</feature>
<feature type="binding site" evidence="1">
    <location>
        <begin position="307"/>
        <end position="311"/>
    </location>
    <ligand>
        <name>N(6)-(1,2-dicarboxyethyl)-AMP</name>
        <dbReference type="ChEBI" id="CHEBI:57567"/>
    </ligand>
</feature>
<feature type="mutagenesis site" description="Abolishes enzyme activity." evidence="2">
    <original>H</original>
    <variation>Q</variation>
    <location>
        <position position="89"/>
    </location>
</feature>
<feature type="mutagenesis site" description="Abolishes enzyme activity." evidence="2">
    <original>H</original>
    <variation>Q</variation>
    <location>
        <position position="141"/>
    </location>
</feature>
<feature type="mutagenesis site" description="Decreases catalytic activity 1000-fold." evidence="2">
    <original>Q</original>
    <variation>E</variation>
    <location>
        <position position="212"/>
    </location>
</feature>
<feature type="mutagenesis site" description="Abolishes enzyme activity." evidence="2">
    <original>Q</original>
    <variation>M</variation>
    <location>
        <position position="212"/>
    </location>
</feature>
<feature type="mutagenesis site" description="Abolishes enzyme activity." evidence="2">
    <original>N</original>
    <variation>D</variation>
    <variation>L</variation>
    <location>
        <position position="270"/>
    </location>
</feature>
<feature type="mutagenesis site" description="Abolishes enzyme activity." evidence="2">
    <original>R</original>
    <variation>K</variation>
    <variation>Q</variation>
    <location>
        <position position="301"/>
    </location>
</feature>
<feature type="sequence conflict" description="In Ref. 3; AA sequence." evidence="4" ref="3">
    <original>Y</original>
    <variation>K</variation>
    <location>
        <position position="5"/>
    </location>
</feature>
<organism>
    <name type="scientific">Bacillus subtilis (strain 168)</name>
    <dbReference type="NCBI Taxonomy" id="224308"/>
    <lineage>
        <taxon>Bacteria</taxon>
        <taxon>Bacillati</taxon>
        <taxon>Bacillota</taxon>
        <taxon>Bacilli</taxon>
        <taxon>Bacillales</taxon>
        <taxon>Bacillaceae</taxon>
        <taxon>Bacillus</taxon>
    </lineage>
</organism>
<reference key="1">
    <citation type="journal article" date="1987" name="J. Biol. Chem.">
        <title>Cloning and characterization of a 12-gene cluster from Bacillus subtilis encoding nine enzymes for de novo purine nucleotide synthesis.</title>
        <authorList>
            <person name="Ebbole D.J."/>
            <person name="Zalkin H."/>
        </authorList>
    </citation>
    <scope>NUCLEOTIDE SEQUENCE [GENOMIC DNA]</scope>
</reference>
<reference key="2">
    <citation type="journal article" date="1997" name="Nature">
        <title>The complete genome sequence of the Gram-positive bacterium Bacillus subtilis.</title>
        <authorList>
            <person name="Kunst F."/>
            <person name="Ogasawara N."/>
            <person name="Moszer I."/>
            <person name="Albertini A.M."/>
            <person name="Alloni G."/>
            <person name="Azevedo V."/>
            <person name="Bertero M.G."/>
            <person name="Bessieres P."/>
            <person name="Bolotin A."/>
            <person name="Borchert S."/>
            <person name="Borriss R."/>
            <person name="Boursier L."/>
            <person name="Brans A."/>
            <person name="Braun M."/>
            <person name="Brignell S.C."/>
            <person name="Bron S."/>
            <person name="Brouillet S."/>
            <person name="Bruschi C.V."/>
            <person name="Caldwell B."/>
            <person name="Capuano V."/>
            <person name="Carter N.M."/>
            <person name="Choi S.-K."/>
            <person name="Codani J.-J."/>
            <person name="Connerton I.F."/>
            <person name="Cummings N.J."/>
            <person name="Daniel R.A."/>
            <person name="Denizot F."/>
            <person name="Devine K.M."/>
            <person name="Duesterhoeft A."/>
            <person name="Ehrlich S.D."/>
            <person name="Emmerson P.T."/>
            <person name="Entian K.-D."/>
            <person name="Errington J."/>
            <person name="Fabret C."/>
            <person name="Ferrari E."/>
            <person name="Foulger D."/>
            <person name="Fritz C."/>
            <person name="Fujita M."/>
            <person name="Fujita Y."/>
            <person name="Fuma S."/>
            <person name="Galizzi A."/>
            <person name="Galleron N."/>
            <person name="Ghim S.-Y."/>
            <person name="Glaser P."/>
            <person name="Goffeau A."/>
            <person name="Golightly E.J."/>
            <person name="Grandi G."/>
            <person name="Guiseppi G."/>
            <person name="Guy B.J."/>
            <person name="Haga K."/>
            <person name="Haiech J."/>
            <person name="Harwood C.R."/>
            <person name="Henaut A."/>
            <person name="Hilbert H."/>
            <person name="Holsappel S."/>
            <person name="Hosono S."/>
            <person name="Hullo M.-F."/>
            <person name="Itaya M."/>
            <person name="Jones L.-M."/>
            <person name="Joris B."/>
            <person name="Karamata D."/>
            <person name="Kasahara Y."/>
            <person name="Klaerr-Blanchard M."/>
            <person name="Klein C."/>
            <person name="Kobayashi Y."/>
            <person name="Koetter P."/>
            <person name="Koningstein G."/>
            <person name="Krogh S."/>
            <person name="Kumano M."/>
            <person name="Kurita K."/>
            <person name="Lapidus A."/>
            <person name="Lardinois S."/>
            <person name="Lauber J."/>
            <person name="Lazarevic V."/>
            <person name="Lee S.-M."/>
            <person name="Levine A."/>
            <person name="Liu H."/>
            <person name="Masuda S."/>
            <person name="Mauel C."/>
            <person name="Medigue C."/>
            <person name="Medina N."/>
            <person name="Mellado R.P."/>
            <person name="Mizuno M."/>
            <person name="Moestl D."/>
            <person name="Nakai S."/>
            <person name="Noback M."/>
            <person name="Noone D."/>
            <person name="O'Reilly M."/>
            <person name="Ogawa K."/>
            <person name="Ogiwara A."/>
            <person name="Oudega B."/>
            <person name="Park S.-H."/>
            <person name="Parro V."/>
            <person name="Pohl T.M."/>
            <person name="Portetelle D."/>
            <person name="Porwollik S."/>
            <person name="Prescott A.M."/>
            <person name="Presecan E."/>
            <person name="Pujic P."/>
            <person name="Purnelle B."/>
            <person name="Rapoport G."/>
            <person name="Rey M."/>
            <person name="Reynolds S."/>
            <person name="Rieger M."/>
            <person name="Rivolta C."/>
            <person name="Rocha E."/>
            <person name="Roche B."/>
            <person name="Rose M."/>
            <person name="Sadaie Y."/>
            <person name="Sato T."/>
            <person name="Scanlan E."/>
            <person name="Schleich S."/>
            <person name="Schroeter R."/>
            <person name="Scoffone F."/>
            <person name="Sekiguchi J."/>
            <person name="Sekowska A."/>
            <person name="Seror S.J."/>
            <person name="Serror P."/>
            <person name="Shin B.-S."/>
            <person name="Soldo B."/>
            <person name="Sorokin A."/>
            <person name="Tacconi E."/>
            <person name="Takagi T."/>
            <person name="Takahashi H."/>
            <person name="Takemaru K."/>
            <person name="Takeuchi M."/>
            <person name="Tamakoshi A."/>
            <person name="Tanaka T."/>
            <person name="Terpstra P."/>
            <person name="Tognoni A."/>
            <person name="Tosato V."/>
            <person name="Uchiyama S."/>
            <person name="Vandenbol M."/>
            <person name="Vannier F."/>
            <person name="Vassarotti A."/>
            <person name="Viari A."/>
            <person name="Wambutt R."/>
            <person name="Wedler E."/>
            <person name="Wedler H."/>
            <person name="Weitzenegger T."/>
            <person name="Winters P."/>
            <person name="Wipat A."/>
            <person name="Yamamoto H."/>
            <person name="Yamane K."/>
            <person name="Yasumoto K."/>
            <person name="Yata K."/>
            <person name="Yoshida K."/>
            <person name="Yoshikawa H.-F."/>
            <person name="Zumstein E."/>
            <person name="Yoshikawa H."/>
            <person name="Danchin A."/>
        </authorList>
    </citation>
    <scope>NUCLEOTIDE SEQUENCE [LARGE SCALE GENOMIC DNA]</scope>
    <source>
        <strain>168</strain>
    </source>
</reference>
<reference key="3">
    <citation type="journal article" date="1992" name="Proc. Natl. Acad. Sci. U.S.A.">
        <title>Adenylosuccinate lyase of Bacillus subtilis regulates the activity of the glutamyl-tRNA synthetase.</title>
        <authorList>
            <person name="Gendron N."/>
            <person name="Breton R."/>
            <person name="Champagne N."/>
            <person name="Lapointe J."/>
        </authorList>
    </citation>
    <scope>PROTEIN SEQUENCE OF 1-30</scope>
    <source>
        <strain>168 / BGSC1A1</strain>
    </source>
</reference>
<reference key="4">
    <citation type="journal article" date="2004" name="Biochemistry">
        <title>Gln212, Asn270, and Arg301 are critical for catalysis by adenylosuccinate lyase from Bacillus subtilis.</title>
        <authorList>
            <person name="Segall M.L."/>
            <person name="Colman R.F."/>
        </authorList>
    </citation>
    <scope>FUNCTION</scope>
    <scope>CATALYTIC ACTIVITY</scope>
    <scope>SUBUNIT</scope>
    <scope>MUTAGENESIS OF HIS-89; HIS-141; GLN-212; ASN-270 AND ARG-301</scope>
</reference>
<reference key="5">
    <citation type="journal article" date="2008" name="Biochemistry">
        <title>Evaluation of types of interactions in subunit association in Bacillus subtilis adenylosuccinate lyase.</title>
        <authorList>
            <person name="De Zoysa Ariyananda L."/>
            <person name="Colman R.F."/>
        </authorList>
    </citation>
    <scope>SUBUNIT</scope>
</reference>
<reference key="6">
    <citation type="journal article" date="2000" name="J. Mol. Biol.">
        <title>The crystal structure of adenylosuccinate lyase from Pyrobaculum aerophilum reveals an intracellular protein with three disulfide bonds.</title>
        <authorList>
            <person name="Toth E.A."/>
            <person name="Worby C."/>
            <person name="Dixon J.E."/>
            <person name="Goedken E.R."/>
            <person name="Marqusee S."/>
            <person name="Yeates T.O."/>
        </authorList>
    </citation>
    <scope>X-RAY CRYSTALLOGRAPHY (3.25 ANGSTROMS)</scope>
</reference>
<keyword id="KW-0002">3D-structure</keyword>
<keyword id="KW-0903">Direct protein sequencing</keyword>
<keyword id="KW-0456">Lyase</keyword>
<keyword id="KW-0658">Purine biosynthesis</keyword>
<keyword id="KW-1185">Reference proteome</keyword>
<proteinExistence type="evidence at protein level"/>
<sequence>MIERYSRPEMSAIWTDENRFQAWLEVEILACEAWAELGVIPKEDVKVMRENASFDINRILEIEKDTRHDVVAFTRAVSESLGEERKWVHYGLTSTDVVDTALSYLLKQANDILLKDLERFVDIIKEKAKEHKYTVMMGRTHGVHAEPTTFGLKLALWHEEMKRNLERFKQAKAGIEVGKISGAVGTYANIDPFVEQYVCEKLGLKAAPISTQTLQRDRHADYMATLALIATSIEKFAVEIRGLQKSETREVEEFFAKGQKGSSAMPHKRNPIGSENMTGMARVIRGYMMTAYENVPLWHERDISHSSAERIILPDATIALNYMLNRFSNIVKNLTVFPENMKRNMDRTLGLIYSQRVLLALIDTGLTREEAYDTVQPKAMEAWEKQVPFRELVEAEEKITSRLSPEKIADCFDYNYHLKNVDLIFERLGLA</sequence>
<name>PUR8_BACSU</name>
<accession>P12047</accession>
<gene>
    <name type="primary">purB</name>
    <name type="synonym">purE</name>
    <name type="ordered locus">BSU06440</name>
</gene>
<dbReference type="EC" id="4.3.2.2" evidence="2"/>
<dbReference type="EMBL" id="J02732">
    <property type="protein sequence ID" value="AAA22676.1"/>
    <property type="molecule type" value="Genomic_DNA"/>
</dbReference>
<dbReference type="EMBL" id="AL009126">
    <property type="protein sequence ID" value="CAB12464.1"/>
    <property type="molecule type" value="Genomic_DNA"/>
</dbReference>
<dbReference type="PIR" id="C29326">
    <property type="entry name" value="WZBSDS"/>
</dbReference>
<dbReference type="RefSeq" id="NP_388526.1">
    <property type="nucleotide sequence ID" value="NC_000964.3"/>
</dbReference>
<dbReference type="RefSeq" id="WP_003233955.1">
    <property type="nucleotide sequence ID" value="NZ_OZ025638.1"/>
</dbReference>
<dbReference type="PDB" id="1F1O">
    <property type="method" value="X-ray"/>
    <property type="resolution" value="3.25 A"/>
    <property type="chains" value="A=1-431"/>
</dbReference>
<dbReference type="PDBsum" id="1F1O"/>
<dbReference type="SMR" id="P12047"/>
<dbReference type="FunCoup" id="P12047">
    <property type="interactions" value="756"/>
</dbReference>
<dbReference type="IntAct" id="P12047">
    <property type="interactions" value="3"/>
</dbReference>
<dbReference type="MINT" id="P12047"/>
<dbReference type="STRING" id="224308.BSU06440"/>
<dbReference type="PaxDb" id="224308-BSU06440"/>
<dbReference type="EnsemblBacteria" id="CAB12464">
    <property type="protein sequence ID" value="CAB12464"/>
    <property type="gene ID" value="BSU_06440"/>
</dbReference>
<dbReference type="GeneID" id="86874923"/>
<dbReference type="GeneID" id="936048"/>
<dbReference type="KEGG" id="bsu:BSU06440"/>
<dbReference type="PATRIC" id="fig|224308.179.peg.700"/>
<dbReference type="eggNOG" id="COG0015">
    <property type="taxonomic scope" value="Bacteria"/>
</dbReference>
<dbReference type="InParanoid" id="P12047"/>
<dbReference type="OrthoDB" id="9768878at2"/>
<dbReference type="PhylomeDB" id="P12047"/>
<dbReference type="BioCyc" id="BSUB:BSU06440-MONOMER"/>
<dbReference type="BRENDA" id="4.3.2.2">
    <property type="organism ID" value="658"/>
</dbReference>
<dbReference type="SABIO-RK" id="P12047"/>
<dbReference type="UniPathway" id="UPA00074">
    <property type="reaction ID" value="UER00132"/>
</dbReference>
<dbReference type="UniPathway" id="UPA00075">
    <property type="reaction ID" value="UER00336"/>
</dbReference>
<dbReference type="EvolutionaryTrace" id="P12047"/>
<dbReference type="Proteomes" id="UP000001570">
    <property type="component" value="Chromosome"/>
</dbReference>
<dbReference type="GO" id="GO:0005829">
    <property type="term" value="C:cytosol"/>
    <property type="evidence" value="ECO:0000318"/>
    <property type="project" value="GO_Central"/>
</dbReference>
<dbReference type="GO" id="GO:0070626">
    <property type="term" value="F:(S)-2-(5-amino-1-(5-phospho-D-ribosyl)imidazole-4-carboxamido) succinate lyase (fumarate-forming) activity"/>
    <property type="evidence" value="ECO:0000318"/>
    <property type="project" value="GO_Central"/>
</dbReference>
<dbReference type="GO" id="GO:0004018">
    <property type="term" value="F:N6-(1,2-dicarboxyethyl)AMP AMP-lyase (fumarate-forming) activity"/>
    <property type="evidence" value="ECO:0000314"/>
    <property type="project" value="MGI"/>
</dbReference>
<dbReference type="GO" id="GO:0044208">
    <property type="term" value="P:'de novo' AMP biosynthetic process"/>
    <property type="evidence" value="ECO:0000318"/>
    <property type="project" value="GO_Central"/>
</dbReference>
<dbReference type="GO" id="GO:0006189">
    <property type="term" value="P:'de novo' IMP biosynthetic process"/>
    <property type="evidence" value="ECO:0007669"/>
    <property type="project" value="UniProtKB-UniPathway"/>
</dbReference>
<dbReference type="GO" id="GO:0006167">
    <property type="term" value="P:AMP biosynthetic process"/>
    <property type="evidence" value="ECO:0000314"/>
    <property type="project" value="MGI"/>
</dbReference>
<dbReference type="CDD" id="cd01360">
    <property type="entry name" value="Adenylsuccinate_lyase_1"/>
    <property type="match status" value="1"/>
</dbReference>
<dbReference type="FunFam" id="1.10.275.10:FF:000006">
    <property type="entry name" value="Adenylosuccinate lyase"/>
    <property type="match status" value="1"/>
</dbReference>
<dbReference type="FunFam" id="1.10.40.30:FF:000007">
    <property type="entry name" value="Adenylosuccinate lyase"/>
    <property type="match status" value="1"/>
</dbReference>
<dbReference type="FunFam" id="1.20.200.10:FF:000008">
    <property type="entry name" value="Adenylosuccinate lyase"/>
    <property type="match status" value="1"/>
</dbReference>
<dbReference type="Gene3D" id="1.10.40.30">
    <property type="entry name" value="Fumarase/aspartase (C-terminal domain)"/>
    <property type="match status" value="1"/>
</dbReference>
<dbReference type="Gene3D" id="1.20.200.10">
    <property type="entry name" value="Fumarase/aspartase (Central domain)"/>
    <property type="match status" value="1"/>
</dbReference>
<dbReference type="Gene3D" id="1.10.275.10">
    <property type="entry name" value="Fumarase/aspartase (N-terminal domain)"/>
    <property type="match status" value="1"/>
</dbReference>
<dbReference type="InterPro" id="IPR019468">
    <property type="entry name" value="AdenyloSucc_lyase_C"/>
</dbReference>
<dbReference type="InterPro" id="IPR024083">
    <property type="entry name" value="Fumarase/histidase_N"/>
</dbReference>
<dbReference type="InterPro" id="IPR020557">
    <property type="entry name" value="Fumarate_lyase_CS"/>
</dbReference>
<dbReference type="InterPro" id="IPR000362">
    <property type="entry name" value="Fumarate_lyase_fam"/>
</dbReference>
<dbReference type="InterPro" id="IPR022761">
    <property type="entry name" value="Fumarate_lyase_N"/>
</dbReference>
<dbReference type="InterPro" id="IPR008948">
    <property type="entry name" value="L-Aspartase-like"/>
</dbReference>
<dbReference type="InterPro" id="IPR004769">
    <property type="entry name" value="Pur_lyase"/>
</dbReference>
<dbReference type="NCBIfam" id="TIGR00928">
    <property type="entry name" value="purB"/>
    <property type="match status" value="1"/>
</dbReference>
<dbReference type="PANTHER" id="PTHR43172">
    <property type="entry name" value="ADENYLOSUCCINATE LYASE"/>
    <property type="match status" value="1"/>
</dbReference>
<dbReference type="PANTHER" id="PTHR43172:SF1">
    <property type="entry name" value="ADENYLOSUCCINATE LYASE"/>
    <property type="match status" value="1"/>
</dbReference>
<dbReference type="Pfam" id="PF10397">
    <property type="entry name" value="ADSL_C"/>
    <property type="match status" value="1"/>
</dbReference>
<dbReference type="Pfam" id="PF00206">
    <property type="entry name" value="Lyase_1"/>
    <property type="match status" value="1"/>
</dbReference>
<dbReference type="PRINTS" id="PR00145">
    <property type="entry name" value="ARGSUCLYASE"/>
</dbReference>
<dbReference type="PRINTS" id="PR00149">
    <property type="entry name" value="FUMRATELYASE"/>
</dbReference>
<dbReference type="SMART" id="SM00998">
    <property type="entry name" value="ADSL_C"/>
    <property type="match status" value="1"/>
</dbReference>
<dbReference type="SUPFAM" id="SSF48557">
    <property type="entry name" value="L-aspartase-like"/>
    <property type="match status" value="1"/>
</dbReference>
<dbReference type="PROSITE" id="PS00163">
    <property type="entry name" value="FUMARATE_LYASES"/>
    <property type="match status" value="1"/>
</dbReference>
<protein>
    <recommendedName>
        <fullName>Adenylosuccinate lyase</fullName>
        <shortName>ASL</shortName>
        <ecNumber evidence="2">4.3.2.2</ecNumber>
    </recommendedName>
    <alternativeName>
        <fullName>Adenylosuccinase</fullName>
        <shortName>ASase</shortName>
    </alternativeName>
    <alternativeName>
        <fullName>Glutamyl--tRNA ligase regulatory factor</fullName>
    </alternativeName>
</protein>
<evidence type="ECO:0000250" key="1">
    <source>
        <dbReference type="UniProtKB" id="P0AB89"/>
    </source>
</evidence>
<evidence type="ECO:0000269" key="2">
    <source>
    </source>
</evidence>
<evidence type="ECO:0000269" key="3">
    <source>
    </source>
</evidence>
<evidence type="ECO:0000305" key="4"/>
<evidence type="ECO:0000305" key="5">
    <source>
    </source>
</evidence>
<comment type="function">
    <text evidence="2">Catalyzes two reactions in de novo purine nucleotide biosynthesis. Catalyzes the breakdown of 5-aminoimidazole- (N-succinylocarboxamide) ribotide (SAICAR or 2-[5-amino-1-(5-phospho-beta-D-ribosyl)imidazole-4-carboxamido]succinate) to 5-aminoimidazole-4-carboxamide ribotide (AICAR or 5-amino-1-(5-phospho-beta-D-ribosyl)imidazole-4-carboxamide) and fumarate, and of adenylosuccinate (ADS or N(6)-(1,2-dicarboxyethyl)-AMP) to adenosine monophosphate (AMP) and fumarate (PubMed:15182182). Influences the affinity of glutamyl--tRNA ligase for its substrates and increases its thermostability.</text>
</comment>
<comment type="catalytic activity">
    <reaction evidence="2">
        <text>N(6)-(1,2-dicarboxyethyl)-AMP = fumarate + AMP</text>
        <dbReference type="Rhea" id="RHEA:16853"/>
        <dbReference type="ChEBI" id="CHEBI:29806"/>
        <dbReference type="ChEBI" id="CHEBI:57567"/>
        <dbReference type="ChEBI" id="CHEBI:456215"/>
        <dbReference type="EC" id="4.3.2.2"/>
    </reaction>
    <physiologicalReaction direction="left-to-right" evidence="5">
        <dbReference type="Rhea" id="RHEA:16854"/>
    </physiologicalReaction>
</comment>
<comment type="catalytic activity">
    <reaction evidence="2">
        <text>(2S)-2-[5-amino-1-(5-phospho-beta-D-ribosyl)imidazole-4-carboxamido]succinate = 5-amino-1-(5-phospho-beta-D-ribosyl)imidazole-4-carboxamide + fumarate</text>
        <dbReference type="Rhea" id="RHEA:23920"/>
        <dbReference type="ChEBI" id="CHEBI:29806"/>
        <dbReference type="ChEBI" id="CHEBI:58443"/>
        <dbReference type="ChEBI" id="CHEBI:58475"/>
        <dbReference type="EC" id="4.3.2.2"/>
    </reaction>
    <physiologicalReaction direction="left-to-right" evidence="5">
        <dbReference type="Rhea" id="RHEA:23921"/>
    </physiologicalReaction>
</comment>
<comment type="pathway">
    <text>Purine metabolism; AMP biosynthesis via de novo pathway; AMP from IMP: step 2/2.</text>
</comment>
<comment type="pathway">
    <text>Purine metabolism; IMP biosynthesis via de novo pathway; 5-amino-1-(5-phospho-D-ribosyl)imidazole-4-carboxamide from 5-amino-1-(5-phospho-D-ribosyl)imidazole-4-carboxylate: step 2/2.</text>
</comment>
<comment type="subunit">
    <text evidence="2 3">Homotetramer. Residues from neighboring subunits contribute catalytic and substrate-binding residues to each active site.</text>
</comment>
<comment type="similarity">
    <text evidence="4">Belongs to the lyase 1 family. Adenylosuccinate lyase subfamily.</text>
</comment>